<feature type="chain" id="PRO_1000016336" description="Histidine--tRNA ligase">
    <location>
        <begin position="1"/>
        <end position="408"/>
    </location>
</feature>
<reference key="1">
    <citation type="submission" date="2007-07" db="EMBL/GenBank/DDBJ databases">
        <title>Complete genome sequence of Campylobacter jejuni subsp doylei 269.97 isolated from human blood.</title>
        <authorList>
            <person name="Fouts D.E."/>
            <person name="Mongodin E.F."/>
            <person name="Puiu D."/>
            <person name="Sebastian Y."/>
            <person name="Miller W.G."/>
            <person name="Mandrell R.E."/>
            <person name="Lastovica A.J."/>
            <person name="Nelson K.E."/>
        </authorList>
    </citation>
    <scope>NUCLEOTIDE SEQUENCE [LARGE SCALE GENOMIC DNA]</scope>
    <source>
        <strain>ATCC BAA-1458 / RM4099 / 269.97</strain>
    </source>
</reference>
<proteinExistence type="inferred from homology"/>
<keyword id="KW-0030">Aminoacyl-tRNA synthetase</keyword>
<keyword id="KW-0067">ATP-binding</keyword>
<keyword id="KW-0963">Cytoplasm</keyword>
<keyword id="KW-0436">Ligase</keyword>
<keyword id="KW-0547">Nucleotide-binding</keyword>
<keyword id="KW-0648">Protein biosynthesis</keyword>
<dbReference type="EC" id="6.1.1.21" evidence="1"/>
<dbReference type="EMBL" id="CP000768">
    <property type="protein sequence ID" value="ABS44049.1"/>
    <property type="molecule type" value="Genomic_DNA"/>
</dbReference>
<dbReference type="SMR" id="A7H477"/>
<dbReference type="KEGG" id="cjd:JJD26997_1247"/>
<dbReference type="HOGENOM" id="CLU_025113_1_1_7"/>
<dbReference type="Proteomes" id="UP000002302">
    <property type="component" value="Chromosome"/>
</dbReference>
<dbReference type="GO" id="GO:0005737">
    <property type="term" value="C:cytoplasm"/>
    <property type="evidence" value="ECO:0007669"/>
    <property type="project" value="UniProtKB-SubCell"/>
</dbReference>
<dbReference type="GO" id="GO:0005524">
    <property type="term" value="F:ATP binding"/>
    <property type="evidence" value="ECO:0007669"/>
    <property type="project" value="UniProtKB-UniRule"/>
</dbReference>
<dbReference type="GO" id="GO:0004821">
    <property type="term" value="F:histidine-tRNA ligase activity"/>
    <property type="evidence" value="ECO:0007669"/>
    <property type="project" value="UniProtKB-UniRule"/>
</dbReference>
<dbReference type="GO" id="GO:0006427">
    <property type="term" value="P:histidyl-tRNA aminoacylation"/>
    <property type="evidence" value="ECO:0007669"/>
    <property type="project" value="UniProtKB-UniRule"/>
</dbReference>
<dbReference type="CDD" id="cd00773">
    <property type="entry name" value="HisRS-like_core"/>
    <property type="match status" value="1"/>
</dbReference>
<dbReference type="Gene3D" id="3.40.50.800">
    <property type="entry name" value="Anticodon-binding domain"/>
    <property type="match status" value="1"/>
</dbReference>
<dbReference type="Gene3D" id="3.30.930.10">
    <property type="entry name" value="Bira Bifunctional Protein, Domain 2"/>
    <property type="match status" value="1"/>
</dbReference>
<dbReference type="HAMAP" id="MF_00127">
    <property type="entry name" value="His_tRNA_synth"/>
    <property type="match status" value="1"/>
</dbReference>
<dbReference type="InterPro" id="IPR006195">
    <property type="entry name" value="aa-tRNA-synth_II"/>
</dbReference>
<dbReference type="InterPro" id="IPR045864">
    <property type="entry name" value="aa-tRNA-synth_II/BPL/LPL"/>
</dbReference>
<dbReference type="InterPro" id="IPR004154">
    <property type="entry name" value="Anticodon-bd"/>
</dbReference>
<dbReference type="InterPro" id="IPR036621">
    <property type="entry name" value="Anticodon-bd_dom_sf"/>
</dbReference>
<dbReference type="InterPro" id="IPR015807">
    <property type="entry name" value="His-tRNA-ligase"/>
</dbReference>
<dbReference type="InterPro" id="IPR041715">
    <property type="entry name" value="HisRS-like_core"/>
</dbReference>
<dbReference type="InterPro" id="IPR004516">
    <property type="entry name" value="HisRS/HisZ"/>
</dbReference>
<dbReference type="NCBIfam" id="TIGR00442">
    <property type="entry name" value="hisS"/>
    <property type="match status" value="1"/>
</dbReference>
<dbReference type="PANTHER" id="PTHR43707:SF1">
    <property type="entry name" value="HISTIDINE--TRNA LIGASE, MITOCHONDRIAL-RELATED"/>
    <property type="match status" value="1"/>
</dbReference>
<dbReference type="PANTHER" id="PTHR43707">
    <property type="entry name" value="HISTIDYL-TRNA SYNTHETASE"/>
    <property type="match status" value="1"/>
</dbReference>
<dbReference type="Pfam" id="PF03129">
    <property type="entry name" value="HGTP_anticodon"/>
    <property type="match status" value="1"/>
</dbReference>
<dbReference type="Pfam" id="PF13393">
    <property type="entry name" value="tRNA-synt_His"/>
    <property type="match status" value="1"/>
</dbReference>
<dbReference type="PIRSF" id="PIRSF001549">
    <property type="entry name" value="His-tRNA_synth"/>
    <property type="match status" value="1"/>
</dbReference>
<dbReference type="SUPFAM" id="SSF52954">
    <property type="entry name" value="Class II aaRS ABD-related"/>
    <property type="match status" value="1"/>
</dbReference>
<dbReference type="SUPFAM" id="SSF55681">
    <property type="entry name" value="Class II aaRS and biotin synthetases"/>
    <property type="match status" value="1"/>
</dbReference>
<dbReference type="PROSITE" id="PS50862">
    <property type="entry name" value="AA_TRNA_LIGASE_II"/>
    <property type="match status" value="1"/>
</dbReference>
<gene>
    <name evidence="1" type="primary">hisS</name>
    <name type="ordered locus">JJD26997_1247</name>
</gene>
<evidence type="ECO:0000255" key="1">
    <source>
        <dbReference type="HAMAP-Rule" id="MF_00127"/>
    </source>
</evidence>
<protein>
    <recommendedName>
        <fullName evidence="1">Histidine--tRNA ligase</fullName>
        <ecNumber evidence="1">6.1.1.21</ecNumber>
    </recommendedName>
    <alternativeName>
        <fullName evidence="1">Histidyl-tRNA synthetase</fullName>
        <shortName evidence="1">HisRS</shortName>
    </alternativeName>
</protein>
<accession>A7H477</accession>
<sequence>MINALKGMKDLLDKDAYYYEKVIQTCEEVVKNYGFTFINTPHLELCILFKRSVGESSDIVGKEMYEFIDKGENHVCMRPEGTAGVVRAYIEKKLDKNTSVKRWFYHGSMFRYERPQKGRLREFHQFGVESFGNASVYEDASIILMLVEIFSRLDIKFKLLINSLGCLECMPKYRENLIHFLDSKEGFCEDCLRRKNLNPIRVLDCKNEHCQSLLNDAPLLNQNLCSSCQKDFEILQSVLKENGVDFEVDSKLVRGLDYYSKTAFEFISDEIGAKAAIAGGGRYDRLIEYLDGKSGFGIGFAMGIERIIAILEQKEEKVQREGIYLCAMDKIYIQKLLHIATNLRKEHKVLLSYEARKLAKHLENADKNNAEIFLCMGENEVQNESLFYKNLVKKEEKMIKISDLKKVL</sequence>
<name>SYH_CAMJD</name>
<organism>
    <name type="scientific">Campylobacter jejuni subsp. doylei (strain ATCC BAA-1458 / RM4099 / 269.97)</name>
    <dbReference type="NCBI Taxonomy" id="360109"/>
    <lineage>
        <taxon>Bacteria</taxon>
        <taxon>Pseudomonadati</taxon>
        <taxon>Campylobacterota</taxon>
        <taxon>Epsilonproteobacteria</taxon>
        <taxon>Campylobacterales</taxon>
        <taxon>Campylobacteraceae</taxon>
        <taxon>Campylobacter</taxon>
    </lineage>
</organism>
<comment type="catalytic activity">
    <reaction evidence="1">
        <text>tRNA(His) + L-histidine + ATP = L-histidyl-tRNA(His) + AMP + diphosphate + H(+)</text>
        <dbReference type="Rhea" id="RHEA:17313"/>
        <dbReference type="Rhea" id="RHEA-COMP:9665"/>
        <dbReference type="Rhea" id="RHEA-COMP:9689"/>
        <dbReference type="ChEBI" id="CHEBI:15378"/>
        <dbReference type="ChEBI" id="CHEBI:30616"/>
        <dbReference type="ChEBI" id="CHEBI:33019"/>
        <dbReference type="ChEBI" id="CHEBI:57595"/>
        <dbReference type="ChEBI" id="CHEBI:78442"/>
        <dbReference type="ChEBI" id="CHEBI:78527"/>
        <dbReference type="ChEBI" id="CHEBI:456215"/>
        <dbReference type="EC" id="6.1.1.21"/>
    </reaction>
</comment>
<comment type="subunit">
    <text evidence="1">Homodimer.</text>
</comment>
<comment type="subcellular location">
    <subcellularLocation>
        <location evidence="1">Cytoplasm</location>
    </subcellularLocation>
</comment>
<comment type="similarity">
    <text evidence="1">Belongs to the class-II aminoacyl-tRNA synthetase family.</text>
</comment>